<protein>
    <recommendedName>
        <fullName>Nascent polypeptide-associated complex subunit alpha</fullName>
        <shortName>NAC-alpha</shortName>
    </recommendedName>
    <alternativeName>
        <fullName>Alpha-NAC</fullName>
    </alternativeName>
    <alternativeName>
        <fullName>Nascent polypeptide complex protein 1</fullName>
    </alternativeName>
</protein>
<organism>
    <name type="scientific">Neurospora crassa (strain ATCC 24698 / 74-OR23-1A / CBS 708.71 / DSM 1257 / FGSC 987)</name>
    <dbReference type="NCBI Taxonomy" id="367110"/>
    <lineage>
        <taxon>Eukaryota</taxon>
        <taxon>Fungi</taxon>
        <taxon>Dikarya</taxon>
        <taxon>Ascomycota</taxon>
        <taxon>Pezizomycotina</taxon>
        <taxon>Sordariomycetes</taxon>
        <taxon>Sordariomycetidae</taxon>
        <taxon>Sordariales</taxon>
        <taxon>Sordariaceae</taxon>
        <taxon>Neurospora</taxon>
    </lineage>
</organism>
<name>NACA_NEUCR</name>
<accession>Q7SI17</accession>
<reference key="1">
    <citation type="journal article" date="2003" name="Nature">
        <title>The genome sequence of the filamentous fungus Neurospora crassa.</title>
        <authorList>
            <person name="Galagan J.E."/>
            <person name="Calvo S.E."/>
            <person name="Borkovich K.A."/>
            <person name="Selker E.U."/>
            <person name="Read N.D."/>
            <person name="Jaffe D.B."/>
            <person name="FitzHugh W."/>
            <person name="Ma L.-J."/>
            <person name="Smirnov S."/>
            <person name="Purcell S."/>
            <person name="Rehman B."/>
            <person name="Elkins T."/>
            <person name="Engels R."/>
            <person name="Wang S."/>
            <person name="Nielsen C.B."/>
            <person name="Butler J."/>
            <person name="Endrizzi M."/>
            <person name="Qui D."/>
            <person name="Ianakiev P."/>
            <person name="Bell-Pedersen D."/>
            <person name="Nelson M.A."/>
            <person name="Werner-Washburne M."/>
            <person name="Selitrennikoff C.P."/>
            <person name="Kinsey J.A."/>
            <person name="Braun E.L."/>
            <person name="Zelter A."/>
            <person name="Schulte U."/>
            <person name="Kothe G.O."/>
            <person name="Jedd G."/>
            <person name="Mewes H.-W."/>
            <person name="Staben C."/>
            <person name="Marcotte E."/>
            <person name="Greenberg D."/>
            <person name="Roy A."/>
            <person name="Foley K."/>
            <person name="Naylor J."/>
            <person name="Stange-Thomann N."/>
            <person name="Barrett R."/>
            <person name="Gnerre S."/>
            <person name="Kamal M."/>
            <person name="Kamvysselis M."/>
            <person name="Mauceli E.W."/>
            <person name="Bielke C."/>
            <person name="Rudd S."/>
            <person name="Frishman D."/>
            <person name="Krystofova S."/>
            <person name="Rasmussen C."/>
            <person name="Metzenberg R.L."/>
            <person name="Perkins D.D."/>
            <person name="Kroken S."/>
            <person name="Cogoni C."/>
            <person name="Macino G."/>
            <person name="Catcheside D.E.A."/>
            <person name="Li W."/>
            <person name="Pratt R.J."/>
            <person name="Osmani S.A."/>
            <person name="DeSouza C.P.C."/>
            <person name="Glass N.L."/>
            <person name="Orbach M.J."/>
            <person name="Berglund J.A."/>
            <person name="Voelker R."/>
            <person name="Yarden O."/>
            <person name="Plamann M."/>
            <person name="Seiler S."/>
            <person name="Dunlap J.C."/>
            <person name="Radford A."/>
            <person name="Aramayo R."/>
            <person name="Natvig D.O."/>
            <person name="Alex L.A."/>
            <person name="Mannhaupt G."/>
            <person name="Ebbole D.J."/>
            <person name="Freitag M."/>
            <person name="Paulsen I."/>
            <person name="Sachs M.S."/>
            <person name="Lander E.S."/>
            <person name="Nusbaum C."/>
            <person name="Birren B.W."/>
        </authorList>
    </citation>
    <scope>NUCLEOTIDE SEQUENCE [LARGE SCALE GENOMIC DNA]</scope>
    <source>
        <strain>ATCC 24698 / 74-OR23-1A / CBS 708.71 / DSM 1257 / FGSC 987</strain>
    </source>
</reference>
<comment type="function">
    <text evidence="1">Component of the nascent polypeptide-associated complex (NAC), a dynamic component of the ribosomal exit tunnel, protecting the emerging polypeptides from interaction with other cytoplasmic proteins to ensure appropriate nascent protein targeting. The NAC complex also promotes mitochondrial protein import by enhancing productive ribosome interactions with the outer mitochondrial membrane and blocks the inappropriate interaction of ribosomes translating non-secretory nascent polypeptides with translocation sites in the membrane of the endoplasmic reticulum. Npc-1/egd2 may also be involved in transcription regulation (By similarity).</text>
</comment>
<comment type="subunit">
    <text evidence="1">Part of the nascent polypeptide-associated complex (NAC), consisting of npc-1/egd2 and npc-2/egd1. NAC associates with ribosomes via npc-2/egd1 (By similarity).</text>
</comment>
<comment type="subcellular location">
    <subcellularLocation>
        <location evidence="1">Cytoplasm</location>
    </subcellularLocation>
    <subcellularLocation>
        <location evidence="1">Nucleus</location>
    </subcellularLocation>
    <text evidence="1">Predominantly cytoplasmic, may also transiently localize to the nucleus.</text>
</comment>
<comment type="similarity">
    <text evidence="4">Belongs to the NAC-alpha family.</text>
</comment>
<sequence length="200" mass="22072">MADPRVEELPEEEVKKTQVEDLDNSSDDESDIEAGDSSLPAGSQAVIHSRNEKKARKAIEKLHLQRVPGITRVTLRRPKNILFVINNPEVYKSPNSNTYIVFGEAKIEDLNASAQAAAAQQLASQSAEHDHAGHTHEHEEAGKAKEEEEEDEGEEVDAEGIEDKDIELVMTQANVSRKKAIKALKENDNDIVNSIMALSI</sequence>
<feature type="chain" id="PRO_0000273493" description="Nascent polypeptide-associated complex subunit alpha">
    <location>
        <begin position="1"/>
        <end position="200"/>
    </location>
</feature>
<feature type="domain" description="NAC-A/B" evidence="2">
    <location>
        <begin position="49"/>
        <end position="114"/>
    </location>
</feature>
<feature type="domain" description="UBA">
    <location>
        <begin position="161"/>
        <end position="200"/>
    </location>
</feature>
<feature type="region of interest" description="Disordered" evidence="3">
    <location>
        <begin position="1"/>
        <end position="54"/>
    </location>
</feature>
<feature type="region of interest" description="Disordered" evidence="3">
    <location>
        <begin position="118"/>
        <end position="165"/>
    </location>
</feature>
<feature type="compositionally biased region" description="Basic and acidic residues" evidence="3">
    <location>
        <begin position="1"/>
        <end position="19"/>
    </location>
</feature>
<feature type="compositionally biased region" description="Acidic residues" evidence="3">
    <location>
        <begin position="20"/>
        <end position="34"/>
    </location>
</feature>
<feature type="compositionally biased region" description="Basic and acidic residues" evidence="3">
    <location>
        <begin position="127"/>
        <end position="146"/>
    </location>
</feature>
<feature type="compositionally biased region" description="Acidic residues" evidence="3">
    <location>
        <begin position="147"/>
        <end position="160"/>
    </location>
</feature>
<proteinExistence type="inferred from homology"/>
<dbReference type="EMBL" id="CM002236">
    <property type="protein sequence ID" value="EAA36539.1"/>
    <property type="molecule type" value="Genomic_DNA"/>
</dbReference>
<dbReference type="RefSeq" id="XP_965775.1">
    <property type="nucleotide sequence ID" value="XM_960682.3"/>
</dbReference>
<dbReference type="SMR" id="Q7SI17"/>
<dbReference type="FunCoup" id="Q7SI17">
    <property type="interactions" value="538"/>
</dbReference>
<dbReference type="STRING" id="367110.Q7SI17"/>
<dbReference type="PaxDb" id="5141-EFNCRP00000000771"/>
<dbReference type="EnsemblFungi" id="EAA36539">
    <property type="protein sequence ID" value="EAA36539"/>
    <property type="gene ID" value="NCU00635"/>
</dbReference>
<dbReference type="GeneID" id="3881972"/>
<dbReference type="KEGG" id="ncr:NCU00635"/>
<dbReference type="VEuPathDB" id="FungiDB:NCU00635"/>
<dbReference type="HOGENOM" id="CLU_057806_2_0_1"/>
<dbReference type="InParanoid" id="Q7SI17"/>
<dbReference type="OrthoDB" id="3169036at2759"/>
<dbReference type="Proteomes" id="UP000001805">
    <property type="component" value="Chromosome 1, Linkage Group I"/>
</dbReference>
<dbReference type="GO" id="GO:0005737">
    <property type="term" value="C:cytoplasm"/>
    <property type="evidence" value="ECO:0000318"/>
    <property type="project" value="GO_Central"/>
</dbReference>
<dbReference type="GO" id="GO:0005854">
    <property type="term" value="C:nascent polypeptide-associated complex"/>
    <property type="evidence" value="ECO:0007669"/>
    <property type="project" value="InterPro"/>
</dbReference>
<dbReference type="GO" id="GO:0005634">
    <property type="term" value="C:nucleus"/>
    <property type="evidence" value="ECO:0007669"/>
    <property type="project" value="UniProtKB-SubCell"/>
</dbReference>
<dbReference type="GO" id="GO:0051082">
    <property type="term" value="F:unfolded protein binding"/>
    <property type="evidence" value="ECO:0000318"/>
    <property type="project" value="GO_Central"/>
</dbReference>
<dbReference type="GO" id="GO:0006612">
    <property type="term" value="P:protein targeting to membrane"/>
    <property type="evidence" value="ECO:0000318"/>
    <property type="project" value="GO_Central"/>
</dbReference>
<dbReference type="GO" id="GO:0015031">
    <property type="term" value="P:protein transport"/>
    <property type="evidence" value="ECO:0007669"/>
    <property type="project" value="UniProtKB-KW"/>
</dbReference>
<dbReference type="CDD" id="cd22054">
    <property type="entry name" value="NAC_NACA"/>
    <property type="match status" value="1"/>
</dbReference>
<dbReference type="CDD" id="cd14358">
    <property type="entry name" value="UBA_NAC_euk"/>
    <property type="match status" value="1"/>
</dbReference>
<dbReference type="FunFam" id="2.20.70.30:FF:000002">
    <property type="entry name" value="Nascent polypeptide-associated complex (NAC), alpha subunit"/>
    <property type="match status" value="1"/>
</dbReference>
<dbReference type="FunFam" id="1.10.8.10:FF:000006">
    <property type="entry name" value="Putative nascent polypeptide-associated complex subunit alpha"/>
    <property type="match status" value="1"/>
</dbReference>
<dbReference type="Gene3D" id="1.10.8.10">
    <property type="entry name" value="DNA helicase RuvA subunit, C-terminal domain"/>
    <property type="match status" value="1"/>
</dbReference>
<dbReference type="Gene3D" id="2.20.70.30">
    <property type="entry name" value="Nascent polypeptide-associated complex domain"/>
    <property type="match status" value="1"/>
</dbReference>
<dbReference type="InterPro" id="IPR016641">
    <property type="entry name" value="EGD2/NACA0like"/>
</dbReference>
<dbReference type="InterPro" id="IPR044034">
    <property type="entry name" value="NAC-like_UBA"/>
</dbReference>
<dbReference type="InterPro" id="IPR038187">
    <property type="entry name" value="NAC_A/B_dom_sf"/>
</dbReference>
<dbReference type="InterPro" id="IPR002715">
    <property type="entry name" value="Nas_poly-pep-assoc_cplx_dom"/>
</dbReference>
<dbReference type="PANTHER" id="PTHR21713">
    <property type="entry name" value="NASCENT POLYPEPTIDE ASSOCIATED COMPLEX ALPHA SUBUNIT-RELATED"/>
    <property type="match status" value="1"/>
</dbReference>
<dbReference type="Pfam" id="PF01849">
    <property type="entry name" value="NAC"/>
    <property type="match status" value="1"/>
</dbReference>
<dbReference type="Pfam" id="PF19026">
    <property type="entry name" value="UBA_HYPK"/>
    <property type="match status" value="1"/>
</dbReference>
<dbReference type="PIRSF" id="PIRSF015901">
    <property type="entry name" value="NAC_alpha"/>
    <property type="match status" value="1"/>
</dbReference>
<dbReference type="SMART" id="SM01407">
    <property type="entry name" value="NAC"/>
    <property type="match status" value="1"/>
</dbReference>
<dbReference type="PROSITE" id="PS51151">
    <property type="entry name" value="NAC_AB"/>
    <property type="match status" value="1"/>
</dbReference>
<keyword id="KW-0963">Cytoplasm</keyword>
<keyword id="KW-0539">Nucleus</keyword>
<keyword id="KW-0653">Protein transport</keyword>
<keyword id="KW-1185">Reference proteome</keyword>
<keyword id="KW-0813">Transport</keyword>
<gene>
    <name type="primary">npc-1</name>
    <name type="synonym">egd2</name>
    <name type="ORF">NCU00635</name>
</gene>
<evidence type="ECO:0000250" key="1"/>
<evidence type="ECO:0000255" key="2">
    <source>
        <dbReference type="PROSITE-ProRule" id="PRU00507"/>
    </source>
</evidence>
<evidence type="ECO:0000256" key="3">
    <source>
        <dbReference type="SAM" id="MobiDB-lite"/>
    </source>
</evidence>
<evidence type="ECO:0000305" key="4"/>